<feature type="chain" id="PRO_0000182364" description="Transcriptional repressor NrdR">
    <location>
        <begin position="1"/>
        <end position="172"/>
    </location>
</feature>
<feature type="domain" description="ATP-cone" evidence="1">
    <location>
        <begin position="46"/>
        <end position="136"/>
    </location>
</feature>
<feature type="zinc finger region" evidence="1">
    <location>
        <begin position="3"/>
        <end position="34"/>
    </location>
</feature>
<feature type="region of interest" description="Disordered" evidence="2">
    <location>
        <begin position="152"/>
        <end position="172"/>
    </location>
</feature>
<feature type="compositionally biased region" description="Low complexity" evidence="2">
    <location>
        <begin position="161"/>
        <end position="172"/>
    </location>
</feature>
<evidence type="ECO:0000255" key="1">
    <source>
        <dbReference type="HAMAP-Rule" id="MF_00440"/>
    </source>
</evidence>
<evidence type="ECO:0000256" key="2">
    <source>
        <dbReference type="SAM" id="MobiDB-lite"/>
    </source>
</evidence>
<evidence type="ECO:0000269" key="3">
    <source>
    </source>
</evidence>
<reference key="1">
    <citation type="submission" date="1998-07" db="EMBL/GenBank/DDBJ databases">
        <title>Streptomyces clavuligerus vitamin B12-dependent ribonucleotide reductase enzyme: from protein to gene.</title>
        <authorList>
            <person name="Kreisberg-Zakarin R."/>
            <person name="Borovok I."/>
            <person name="Schreiber R."/>
            <person name="Holmgren A."/>
            <person name="Aslund F."/>
            <person name="Reichard P."/>
            <person name="Cohen G."/>
            <person name="Aharonowitz Y."/>
        </authorList>
    </citation>
    <scope>NUCLEOTIDE SEQUENCE [GENOMIC DNA]</scope>
    <source>
        <strain>ATCC 27064 / DSM 738 / JCM 4710 / NBRC 13307 / NCIMB 12785 / NRRL 3585 / VKM Ac-602</strain>
    </source>
</reference>
<reference key="2">
    <citation type="journal article" date="2005" name="Trends Genet.">
        <title>Identification of a bacterial regulatory system for ribonucleotide reductases by phylogenetic profiling.</title>
        <authorList>
            <person name="Rodionov D.A."/>
            <person name="Gelfand M.S."/>
        </authorList>
    </citation>
    <scope>FUNCTION</scope>
</reference>
<proteinExistence type="inferred from homology"/>
<keyword id="KW-0067">ATP-binding</keyword>
<keyword id="KW-0238">DNA-binding</keyword>
<keyword id="KW-0479">Metal-binding</keyword>
<keyword id="KW-0547">Nucleotide-binding</keyword>
<keyword id="KW-0678">Repressor</keyword>
<keyword id="KW-0804">Transcription</keyword>
<keyword id="KW-0805">Transcription regulation</keyword>
<keyword id="KW-0862">Zinc</keyword>
<keyword id="KW-0863">Zinc-finger</keyword>
<dbReference type="EMBL" id="AJ224870">
    <property type="protein sequence ID" value="CAA12170.1"/>
    <property type="molecule type" value="Genomic_DNA"/>
</dbReference>
<dbReference type="RefSeq" id="WP_003956102.1">
    <property type="nucleotide sequence ID" value="NZ_CM000913.1"/>
</dbReference>
<dbReference type="SMR" id="O86848"/>
<dbReference type="STRING" id="1901.BB341_05485"/>
<dbReference type="GeneID" id="93728861"/>
<dbReference type="eggNOG" id="COG1327">
    <property type="taxonomic scope" value="Bacteria"/>
</dbReference>
<dbReference type="OrthoDB" id="9807461at2"/>
<dbReference type="GO" id="GO:0005524">
    <property type="term" value="F:ATP binding"/>
    <property type="evidence" value="ECO:0007669"/>
    <property type="project" value="UniProtKB-KW"/>
</dbReference>
<dbReference type="GO" id="GO:0003677">
    <property type="term" value="F:DNA binding"/>
    <property type="evidence" value="ECO:0007669"/>
    <property type="project" value="UniProtKB-KW"/>
</dbReference>
<dbReference type="GO" id="GO:0008270">
    <property type="term" value="F:zinc ion binding"/>
    <property type="evidence" value="ECO:0007669"/>
    <property type="project" value="UniProtKB-UniRule"/>
</dbReference>
<dbReference type="GO" id="GO:0045892">
    <property type="term" value="P:negative regulation of DNA-templated transcription"/>
    <property type="evidence" value="ECO:0007669"/>
    <property type="project" value="UniProtKB-UniRule"/>
</dbReference>
<dbReference type="HAMAP" id="MF_00440">
    <property type="entry name" value="NrdR"/>
    <property type="match status" value="1"/>
</dbReference>
<dbReference type="InterPro" id="IPR005144">
    <property type="entry name" value="ATP-cone_dom"/>
</dbReference>
<dbReference type="InterPro" id="IPR055173">
    <property type="entry name" value="NrdR-like_N"/>
</dbReference>
<dbReference type="InterPro" id="IPR003796">
    <property type="entry name" value="RNR_NrdR-like"/>
</dbReference>
<dbReference type="NCBIfam" id="TIGR00244">
    <property type="entry name" value="transcriptional regulator NrdR"/>
    <property type="match status" value="1"/>
</dbReference>
<dbReference type="PANTHER" id="PTHR30455">
    <property type="entry name" value="TRANSCRIPTIONAL REPRESSOR NRDR"/>
    <property type="match status" value="1"/>
</dbReference>
<dbReference type="PANTHER" id="PTHR30455:SF2">
    <property type="entry name" value="TRANSCRIPTIONAL REPRESSOR NRDR"/>
    <property type="match status" value="1"/>
</dbReference>
<dbReference type="Pfam" id="PF03477">
    <property type="entry name" value="ATP-cone"/>
    <property type="match status" value="1"/>
</dbReference>
<dbReference type="Pfam" id="PF22811">
    <property type="entry name" value="Zn_ribbon_NrdR"/>
    <property type="match status" value="1"/>
</dbReference>
<dbReference type="PROSITE" id="PS51161">
    <property type="entry name" value="ATP_CONE"/>
    <property type="match status" value="1"/>
</dbReference>
<name>NRDR_STRCL</name>
<sequence length="172" mass="18689">MHCPFCRHPDSRVVDSRTTDDGTSIRRRRQCPDCSRRFTTVETASLMVIKRSGVTEPFSRTKVISGVRKACQGRPVTEDALAQLGQRVEEAVRATGSAELTTHDVGLAILGPLQELDLVAYLRFASVYRAFDSLEDFEAAIAELREHRLPAERSGGGTCGTGTVPVPAGTAD</sequence>
<accession>O86848</accession>
<gene>
    <name evidence="1" type="primary">nrdR</name>
</gene>
<organism>
    <name type="scientific">Streptomyces clavuligerus</name>
    <dbReference type="NCBI Taxonomy" id="1901"/>
    <lineage>
        <taxon>Bacteria</taxon>
        <taxon>Bacillati</taxon>
        <taxon>Actinomycetota</taxon>
        <taxon>Actinomycetes</taxon>
        <taxon>Kitasatosporales</taxon>
        <taxon>Streptomycetaceae</taxon>
        <taxon>Streptomyces</taxon>
    </lineage>
</organism>
<protein>
    <recommendedName>
        <fullName evidence="1">Transcriptional repressor NrdR</fullName>
    </recommendedName>
</protein>
<comment type="function">
    <text evidence="1 3">Negatively regulates transcription of bacterial ribonucleotide reductase nrd genes and operons by binding to NrdR-boxes.</text>
</comment>
<comment type="cofactor">
    <cofactor evidence="1">
        <name>Zn(2+)</name>
        <dbReference type="ChEBI" id="CHEBI:29105"/>
    </cofactor>
    <text evidence="1">Binds 1 zinc ion.</text>
</comment>
<comment type="similarity">
    <text evidence="1">Belongs to the NrdR family.</text>
</comment>